<reference key="1">
    <citation type="journal article" date="2001" name="Nature">
        <title>Complete genome sequence of a multiple drug resistant Salmonella enterica serovar Typhi CT18.</title>
        <authorList>
            <person name="Parkhill J."/>
            <person name="Dougan G."/>
            <person name="James K.D."/>
            <person name="Thomson N.R."/>
            <person name="Pickard D."/>
            <person name="Wain J."/>
            <person name="Churcher C.M."/>
            <person name="Mungall K.L."/>
            <person name="Bentley S.D."/>
            <person name="Holden M.T.G."/>
            <person name="Sebaihia M."/>
            <person name="Baker S."/>
            <person name="Basham D."/>
            <person name="Brooks K."/>
            <person name="Chillingworth T."/>
            <person name="Connerton P."/>
            <person name="Cronin A."/>
            <person name="Davis P."/>
            <person name="Davies R.M."/>
            <person name="Dowd L."/>
            <person name="White N."/>
            <person name="Farrar J."/>
            <person name="Feltwell T."/>
            <person name="Hamlin N."/>
            <person name="Haque A."/>
            <person name="Hien T.T."/>
            <person name="Holroyd S."/>
            <person name="Jagels K."/>
            <person name="Krogh A."/>
            <person name="Larsen T.S."/>
            <person name="Leather S."/>
            <person name="Moule S."/>
            <person name="O'Gaora P."/>
            <person name="Parry C."/>
            <person name="Quail M.A."/>
            <person name="Rutherford K.M."/>
            <person name="Simmonds M."/>
            <person name="Skelton J."/>
            <person name="Stevens K."/>
            <person name="Whitehead S."/>
            <person name="Barrell B.G."/>
        </authorList>
    </citation>
    <scope>NUCLEOTIDE SEQUENCE [LARGE SCALE GENOMIC DNA]</scope>
    <source>
        <strain>CT18</strain>
    </source>
</reference>
<reference key="2">
    <citation type="journal article" date="2003" name="J. Bacteriol.">
        <title>Comparative genomics of Salmonella enterica serovar Typhi strains Ty2 and CT18.</title>
        <authorList>
            <person name="Deng W."/>
            <person name="Liou S.-R."/>
            <person name="Plunkett G. III"/>
            <person name="Mayhew G.F."/>
            <person name="Rose D.J."/>
            <person name="Burland V."/>
            <person name="Kodoyianni V."/>
            <person name="Schwartz D.C."/>
            <person name="Blattner F.R."/>
        </authorList>
    </citation>
    <scope>NUCLEOTIDE SEQUENCE [LARGE SCALE GENOMIC DNA]</scope>
    <source>
        <strain>ATCC 700931 / Ty2</strain>
    </source>
</reference>
<comment type="function">
    <text evidence="1">Specifically methylates position 2 of adenine 2503 in 23S rRNA and position 2 of adenine 37 in tRNAs. m2A2503 modification seems to play a crucial role in the proofreading step occurring at the peptidyl transferase center and thus would serve to optimize ribosomal fidelity.</text>
</comment>
<comment type="catalytic activity">
    <reaction evidence="1">
        <text>adenosine(2503) in 23S rRNA + 2 reduced [2Fe-2S]-[ferredoxin] + 2 S-adenosyl-L-methionine = 2-methyladenosine(2503) in 23S rRNA + 5'-deoxyadenosine + L-methionine + 2 oxidized [2Fe-2S]-[ferredoxin] + S-adenosyl-L-homocysteine</text>
        <dbReference type="Rhea" id="RHEA:42916"/>
        <dbReference type="Rhea" id="RHEA-COMP:10000"/>
        <dbReference type="Rhea" id="RHEA-COMP:10001"/>
        <dbReference type="Rhea" id="RHEA-COMP:10152"/>
        <dbReference type="Rhea" id="RHEA-COMP:10282"/>
        <dbReference type="ChEBI" id="CHEBI:17319"/>
        <dbReference type="ChEBI" id="CHEBI:33737"/>
        <dbReference type="ChEBI" id="CHEBI:33738"/>
        <dbReference type="ChEBI" id="CHEBI:57844"/>
        <dbReference type="ChEBI" id="CHEBI:57856"/>
        <dbReference type="ChEBI" id="CHEBI:59789"/>
        <dbReference type="ChEBI" id="CHEBI:74411"/>
        <dbReference type="ChEBI" id="CHEBI:74497"/>
        <dbReference type="EC" id="2.1.1.192"/>
    </reaction>
</comment>
<comment type="catalytic activity">
    <reaction evidence="1">
        <text>adenosine(37) in tRNA + 2 reduced [2Fe-2S]-[ferredoxin] + 2 S-adenosyl-L-methionine = 2-methyladenosine(37) in tRNA + 5'-deoxyadenosine + L-methionine + 2 oxidized [2Fe-2S]-[ferredoxin] + S-adenosyl-L-homocysteine</text>
        <dbReference type="Rhea" id="RHEA:43332"/>
        <dbReference type="Rhea" id="RHEA-COMP:10000"/>
        <dbReference type="Rhea" id="RHEA-COMP:10001"/>
        <dbReference type="Rhea" id="RHEA-COMP:10162"/>
        <dbReference type="Rhea" id="RHEA-COMP:10485"/>
        <dbReference type="ChEBI" id="CHEBI:17319"/>
        <dbReference type="ChEBI" id="CHEBI:33737"/>
        <dbReference type="ChEBI" id="CHEBI:33738"/>
        <dbReference type="ChEBI" id="CHEBI:57844"/>
        <dbReference type="ChEBI" id="CHEBI:57856"/>
        <dbReference type="ChEBI" id="CHEBI:59789"/>
        <dbReference type="ChEBI" id="CHEBI:74411"/>
        <dbReference type="ChEBI" id="CHEBI:74497"/>
        <dbReference type="EC" id="2.1.1.192"/>
    </reaction>
</comment>
<comment type="cofactor">
    <cofactor evidence="1">
        <name>[4Fe-4S] cluster</name>
        <dbReference type="ChEBI" id="CHEBI:49883"/>
    </cofactor>
    <text evidence="1">Binds 1 [4Fe-4S] cluster. The cluster is coordinated with 3 cysteines and an exchangeable S-adenosyl-L-methionine.</text>
</comment>
<comment type="subcellular location">
    <subcellularLocation>
        <location evidence="1">Cytoplasm</location>
    </subcellularLocation>
</comment>
<comment type="miscellaneous">
    <text evidence="1">Reaction proceeds by a ping-pong mechanism involving intermediate methylation of a conserved cysteine residue.</text>
</comment>
<comment type="similarity">
    <text evidence="1">Belongs to the radical SAM superfamily. RlmN family.</text>
</comment>
<name>RLMN_SALTI</name>
<feature type="chain" id="PRO_0000350389" description="Dual-specificity RNA methyltransferase RlmN">
    <location>
        <begin position="1"/>
        <end position="388"/>
    </location>
</feature>
<feature type="domain" description="Radical SAM core" evidence="2">
    <location>
        <begin position="115"/>
        <end position="354"/>
    </location>
</feature>
<feature type="active site" description="Proton acceptor" evidence="1">
    <location>
        <position position="109"/>
    </location>
</feature>
<feature type="active site" description="S-methylcysteine intermediate" evidence="1">
    <location>
        <position position="359"/>
    </location>
</feature>
<feature type="binding site" evidence="1">
    <location>
        <position position="129"/>
    </location>
    <ligand>
        <name>[4Fe-4S] cluster</name>
        <dbReference type="ChEBI" id="CHEBI:49883"/>
        <note>4Fe-4S-S-AdoMet</note>
    </ligand>
</feature>
<feature type="binding site" evidence="1">
    <location>
        <position position="133"/>
    </location>
    <ligand>
        <name>[4Fe-4S] cluster</name>
        <dbReference type="ChEBI" id="CHEBI:49883"/>
        <note>4Fe-4S-S-AdoMet</note>
    </ligand>
</feature>
<feature type="binding site" evidence="1">
    <location>
        <position position="136"/>
    </location>
    <ligand>
        <name>[4Fe-4S] cluster</name>
        <dbReference type="ChEBI" id="CHEBI:49883"/>
        <note>4Fe-4S-S-AdoMet</note>
    </ligand>
</feature>
<feature type="binding site" evidence="1">
    <location>
        <begin position="183"/>
        <end position="184"/>
    </location>
    <ligand>
        <name>S-adenosyl-L-methionine</name>
        <dbReference type="ChEBI" id="CHEBI:59789"/>
    </ligand>
</feature>
<feature type="binding site" evidence="1">
    <location>
        <position position="215"/>
    </location>
    <ligand>
        <name>S-adenosyl-L-methionine</name>
        <dbReference type="ChEBI" id="CHEBI:59789"/>
    </ligand>
</feature>
<feature type="binding site" evidence="1">
    <location>
        <begin position="237"/>
        <end position="239"/>
    </location>
    <ligand>
        <name>S-adenosyl-L-methionine</name>
        <dbReference type="ChEBI" id="CHEBI:59789"/>
    </ligand>
</feature>
<feature type="binding site" evidence="1">
    <location>
        <position position="316"/>
    </location>
    <ligand>
        <name>S-adenosyl-L-methionine</name>
        <dbReference type="ChEBI" id="CHEBI:59789"/>
    </ligand>
</feature>
<feature type="disulfide bond" description="(transient)" evidence="1">
    <location>
        <begin position="122"/>
        <end position="359"/>
    </location>
</feature>
<accession>Q8Z4P2</accession>
<accession>Q7CBK0</accession>
<evidence type="ECO:0000255" key="1">
    <source>
        <dbReference type="HAMAP-Rule" id="MF_01849"/>
    </source>
</evidence>
<evidence type="ECO:0000255" key="2">
    <source>
        <dbReference type="PROSITE-ProRule" id="PRU01266"/>
    </source>
</evidence>
<dbReference type="EC" id="2.1.1.192" evidence="1"/>
<dbReference type="EMBL" id="AE014613">
    <property type="protein sequence ID" value="AAO68054.1"/>
    <property type="molecule type" value="Genomic_DNA"/>
</dbReference>
<dbReference type="EMBL" id="AL513382">
    <property type="protein sequence ID" value="CAD02728.1"/>
    <property type="molecule type" value="Genomic_DNA"/>
</dbReference>
<dbReference type="RefSeq" id="NP_457057.1">
    <property type="nucleotide sequence ID" value="NC_003198.1"/>
</dbReference>
<dbReference type="RefSeq" id="WP_000003206.1">
    <property type="nucleotide sequence ID" value="NZ_WSUR01000007.1"/>
</dbReference>
<dbReference type="SMR" id="Q8Z4P2"/>
<dbReference type="STRING" id="220341.gene:17586662"/>
<dbReference type="KEGG" id="stt:t0331"/>
<dbReference type="KEGG" id="sty:STY2770"/>
<dbReference type="PATRIC" id="fig|220341.7.peg.2812"/>
<dbReference type="eggNOG" id="COG0820">
    <property type="taxonomic scope" value="Bacteria"/>
</dbReference>
<dbReference type="HOGENOM" id="CLU_029101_0_0_6"/>
<dbReference type="OMA" id="GTIKWAM"/>
<dbReference type="OrthoDB" id="9793973at2"/>
<dbReference type="Proteomes" id="UP000000541">
    <property type="component" value="Chromosome"/>
</dbReference>
<dbReference type="Proteomes" id="UP000002670">
    <property type="component" value="Chromosome"/>
</dbReference>
<dbReference type="GO" id="GO:0005737">
    <property type="term" value="C:cytoplasm"/>
    <property type="evidence" value="ECO:0007669"/>
    <property type="project" value="UniProtKB-SubCell"/>
</dbReference>
<dbReference type="GO" id="GO:0051539">
    <property type="term" value="F:4 iron, 4 sulfur cluster binding"/>
    <property type="evidence" value="ECO:0007669"/>
    <property type="project" value="UniProtKB-UniRule"/>
</dbReference>
<dbReference type="GO" id="GO:0046872">
    <property type="term" value="F:metal ion binding"/>
    <property type="evidence" value="ECO:0007669"/>
    <property type="project" value="UniProtKB-KW"/>
</dbReference>
<dbReference type="GO" id="GO:0070040">
    <property type="term" value="F:rRNA (adenine(2503)-C2-)-methyltransferase activity"/>
    <property type="evidence" value="ECO:0007669"/>
    <property type="project" value="UniProtKB-UniRule"/>
</dbReference>
<dbReference type="GO" id="GO:0019843">
    <property type="term" value="F:rRNA binding"/>
    <property type="evidence" value="ECO:0007669"/>
    <property type="project" value="UniProtKB-UniRule"/>
</dbReference>
<dbReference type="GO" id="GO:0002935">
    <property type="term" value="F:tRNA (adenine(37)-C2)-methyltransferase activity"/>
    <property type="evidence" value="ECO:0007669"/>
    <property type="project" value="UniProtKB-UniRule"/>
</dbReference>
<dbReference type="GO" id="GO:0000049">
    <property type="term" value="F:tRNA binding"/>
    <property type="evidence" value="ECO:0007669"/>
    <property type="project" value="UniProtKB-UniRule"/>
</dbReference>
<dbReference type="GO" id="GO:0070475">
    <property type="term" value="P:rRNA base methylation"/>
    <property type="evidence" value="ECO:0007669"/>
    <property type="project" value="UniProtKB-UniRule"/>
</dbReference>
<dbReference type="GO" id="GO:0030488">
    <property type="term" value="P:tRNA methylation"/>
    <property type="evidence" value="ECO:0007669"/>
    <property type="project" value="UniProtKB-UniRule"/>
</dbReference>
<dbReference type="CDD" id="cd01335">
    <property type="entry name" value="Radical_SAM"/>
    <property type="match status" value="1"/>
</dbReference>
<dbReference type="FunFam" id="1.10.150.530:FF:000001">
    <property type="entry name" value="Dual-specificity RNA methyltransferase RlmN"/>
    <property type="match status" value="1"/>
</dbReference>
<dbReference type="FunFam" id="3.20.20.70:FF:000008">
    <property type="entry name" value="Dual-specificity RNA methyltransferase RlmN"/>
    <property type="match status" value="1"/>
</dbReference>
<dbReference type="Gene3D" id="1.10.150.530">
    <property type="match status" value="1"/>
</dbReference>
<dbReference type="Gene3D" id="3.20.20.70">
    <property type="entry name" value="Aldolase class I"/>
    <property type="match status" value="1"/>
</dbReference>
<dbReference type="HAMAP" id="MF_01849">
    <property type="entry name" value="RNA_methyltr_RlmN"/>
    <property type="match status" value="1"/>
</dbReference>
<dbReference type="InterPro" id="IPR013785">
    <property type="entry name" value="Aldolase_TIM"/>
</dbReference>
<dbReference type="InterPro" id="IPR040072">
    <property type="entry name" value="Methyltransferase_A"/>
</dbReference>
<dbReference type="InterPro" id="IPR048641">
    <property type="entry name" value="RlmN_N"/>
</dbReference>
<dbReference type="InterPro" id="IPR027492">
    <property type="entry name" value="RNA_MTrfase_RlmN"/>
</dbReference>
<dbReference type="InterPro" id="IPR004383">
    <property type="entry name" value="rRNA_lsu_MTrfase_RlmN/Cfr"/>
</dbReference>
<dbReference type="InterPro" id="IPR007197">
    <property type="entry name" value="rSAM"/>
</dbReference>
<dbReference type="NCBIfam" id="NF008396">
    <property type="entry name" value="PRK11194.1"/>
    <property type="match status" value="1"/>
</dbReference>
<dbReference type="NCBIfam" id="TIGR00048">
    <property type="entry name" value="rRNA_mod_RlmN"/>
    <property type="match status" value="1"/>
</dbReference>
<dbReference type="PANTHER" id="PTHR30544">
    <property type="entry name" value="23S RRNA METHYLTRANSFERASE"/>
    <property type="match status" value="1"/>
</dbReference>
<dbReference type="PANTHER" id="PTHR30544:SF5">
    <property type="entry name" value="RADICAL SAM CORE DOMAIN-CONTAINING PROTEIN"/>
    <property type="match status" value="1"/>
</dbReference>
<dbReference type="Pfam" id="PF04055">
    <property type="entry name" value="Radical_SAM"/>
    <property type="match status" value="1"/>
</dbReference>
<dbReference type="Pfam" id="PF21016">
    <property type="entry name" value="RlmN_N"/>
    <property type="match status" value="1"/>
</dbReference>
<dbReference type="PIRSF" id="PIRSF006004">
    <property type="entry name" value="CHP00048"/>
    <property type="match status" value="1"/>
</dbReference>
<dbReference type="SFLD" id="SFLDF00275">
    <property type="entry name" value="adenosine_C2_methyltransferase"/>
    <property type="match status" value="1"/>
</dbReference>
<dbReference type="SFLD" id="SFLDS00029">
    <property type="entry name" value="Radical_SAM"/>
    <property type="match status" value="1"/>
</dbReference>
<dbReference type="SUPFAM" id="SSF102114">
    <property type="entry name" value="Radical SAM enzymes"/>
    <property type="match status" value="1"/>
</dbReference>
<dbReference type="PROSITE" id="PS51918">
    <property type="entry name" value="RADICAL_SAM"/>
    <property type="match status" value="1"/>
</dbReference>
<organism>
    <name type="scientific">Salmonella typhi</name>
    <dbReference type="NCBI Taxonomy" id="90370"/>
    <lineage>
        <taxon>Bacteria</taxon>
        <taxon>Pseudomonadati</taxon>
        <taxon>Pseudomonadota</taxon>
        <taxon>Gammaproteobacteria</taxon>
        <taxon>Enterobacterales</taxon>
        <taxon>Enterobacteriaceae</taxon>
        <taxon>Salmonella</taxon>
    </lineage>
</organism>
<proteinExistence type="inferred from homology"/>
<gene>
    <name evidence="1" type="primary">rlmN</name>
    <name type="ordered locus">STY2770</name>
    <name type="ordered locus">t0331</name>
</gene>
<keyword id="KW-0004">4Fe-4S</keyword>
<keyword id="KW-0963">Cytoplasm</keyword>
<keyword id="KW-1015">Disulfide bond</keyword>
<keyword id="KW-0408">Iron</keyword>
<keyword id="KW-0411">Iron-sulfur</keyword>
<keyword id="KW-0479">Metal-binding</keyword>
<keyword id="KW-0489">Methyltransferase</keyword>
<keyword id="KW-0698">rRNA processing</keyword>
<keyword id="KW-0949">S-adenosyl-L-methionine</keyword>
<keyword id="KW-0808">Transferase</keyword>
<keyword id="KW-0819">tRNA processing</keyword>
<protein>
    <recommendedName>
        <fullName evidence="1">Dual-specificity RNA methyltransferase RlmN</fullName>
        <ecNumber evidence="1">2.1.1.192</ecNumber>
    </recommendedName>
    <alternativeName>
        <fullName evidence="1">23S rRNA (adenine(2503)-C(2))-methyltransferase</fullName>
    </alternativeName>
    <alternativeName>
        <fullName evidence="1">23S rRNA m2A2503 methyltransferase</fullName>
    </alternativeName>
    <alternativeName>
        <fullName evidence="1">Ribosomal RNA large subunit methyltransferase N</fullName>
    </alternativeName>
    <alternativeName>
        <fullName evidence="1">tRNA (adenine(37)-C(2))-methyltransferase</fullName>
    </alternativeName>
    <alternativeName>
        <fullName evidence="1">tRNA m2A37 methyltransferase</fullName>
    </alternativeName>
</protein>
<sequence>MSEQIVTPESSTPVVLNNETKINLLDLNRQQMREFFKNLGEKPFRADQVMKWMYHYCCDNFDEMTDINKVLRGKLKEVAEIRAPEVVEEQRSSDGTIKWAIAVGDQRVETVYIPEDDRATLCVSSQVGCALECKFCSTAQQGFNRNLRVSEIIGQVWRAAKIVGAAKVTGQRPITNVVMMGMGEPLLNLTNVVPAMEIMLDDFGFGLSKRRVTLSTSGVVPALDKLGDMIDVALAISLHAPNDTIRDEIVPINKKYNIETFLGAVRRYLEKSNANQGRVTIEYVMLDHVNDGTEHAHQLAELLKETPCKINLIPWNPFPGAPYGRSSNSRIDRFSKVLMSYGFTTIVRKTRGDDIDAACGQLAGDVIDRTKRTLRKRMQGEVIDIKAI</sequence>